<accession>Q83I64</accession>
<gene>
    <name evidence="1" type="primary">rplF</name>
    <name type="ordered locus">TW221</name>
</gene>
<feature type="chain" id="PRO_0000260972" description="Large ribosomal subunit protein uL6">
    <location>
        <begin position="1"/>
        <end position="178"/>
    </location>
</feature>
<proteinExistence type="inferred from homology"/>
<organism>
    <name type="scientific">Tropheryma whipplei (strain TW08/27)</name>
    <name type="common">Whipple's bacillus</name>
    <dbReference type="NCBI Taxonomy" id="218496"/>
    <lineage>
        <taxon>Bacteria</taxon>
        <taxon>Bacillati</taxon>
        <taxon>Actinomycetota</taxon>
        <taxon>Actinomycetes</taxon>
        <taxon>Micrococcales</taxon>
        <taxon>Tropherymataceae</taxon>
        <taxon>Tropheryma</taxon>
    </lineage>
</organism>
<dbReference type="EMBL" id="BX251410">
    <property type="protein sequence ID" value="CAD66898.1"/>
    <property type="status" value="ALT_INIT"/>
    <property type="molecule type" value="Genomic_DNA"/>
</dbReference>
<dbReference type="RefSeq" id="WP_011096179.1">
    <property type="nucleotide sequence ID" value="NC_004551.1"/>
</dbReference>
<dbReference type="SMR" id="Q83I64"/>
<dbReference type="GeneID" id="67387997"/>
<dbReference type="KEGG" id="tws:TW221"/>
<dbReference type="HOGENOM" id="CLU_065464_1_2_11"/>
<dbReference type="GO" id="GO:0022625">
    <property type="term" value="C:cytosolic large ribosomal subunit"/>
    <property type="evidence" value="ECO:0007669"/>
    <property type="project" value="TreeGrafter"/>
</dbReference>
<dbReference type="GO" id="GO:0019843">
    <property type="term" value="F:rRNA binding"/>
    <property type="evidence" value="ECO:0007669"/>
    <property type="project" value="UniProtKB-UniRule"/>
</dbReference>
<dbReference type="GO" id="GO:0003735">
    <property type="term" value="F:structural constituent of ribosome"/>
    <property type="evidence" value="ECO:0007669"/>
    <property type="project" value="InterPro"/>
</dbReference>
<dbReference type="GO" id="GO:0002181">
    <property type="term" value="P:cytoplasmic translation"/>
    <property type="evidence" value="ECO:0007669"/>
    <property type="project" value="TreeGrafter"/>
</dbReference>
<dbReference type="FunFam" id="3.90.930.12:FF:000001">
    <property type="entry name" value="50S ribosomal protein L6"/>
    <property type="match status" value="1"/>
</dbReference>
<dbReference type="FunFam" id="3.90.930.12:FF:000002">
    <property type="entry name" value="50S ribosomal protein L6"/>
    <property type="match status" value="1"/>
</dbReference>
<dbReference type="Gene3D" id="3.90.930.12">
    <property type="entry name" value="Ribosomal protein L6, alpha-beta domain"/>
    <property type="match status" value="2"/>
</dbReference>
<dbReference type="HAMAP" id="MF_01365_B">
    <property type="entry name" value="Ribosomal_uL6_B"/>
    <property type="match status" value="1"/>
</dbReference>
<dbReference type="InterPro" id="IPR000702">
    <property type="entry name" value="Ribosomal_uL6-like"/>
</dbReference>
<dbReference type="InterPro" id="IPR036789">
    <property type="entry name" value="Ribosomal_uL6-like_a/b-dom_sf"/>
</dbReference>
<dbReference type="InterPro" id="IPR020040">
    <property type="entry name" value="Ribosomal_uL6_a/b-dom"/>
</dbReference>
<dbReference type="InterPro" id="IPR019906">
    <property type="entry name" value="Ribosomal_uL6_bac-type"/>
</dbReference>
<dbReference type="InterPro" id="IPR002358">
    <property type="entry name" value="Ribosomal_uL6_CS"/>
</dbReference>
<dbReference type="NCBIfam" id="TIGR03654">
    <property type="entry name" value="L6_bact"/>
    <property type="match status" value="1"/>
</dbReference>
<dbReference type="PANTHER" id="PTHR11655">
    <property type="entry name" value="60S/50S RIBOSOMAL PROTEIN L6/L9"/>
    <property type="match status" value="1"/>
</dbReference>
<dbReference type="PANTHER" id="PTHR11655:SF14">
    <property type="entry name" value="LARGE RIBOSOMAL SUBUNIT PROTEIN UL6M"/>
    <property type="match status" value="1"/>
</dbReference>
<dbReference type="Pfam" id="PF00347">
    <property type="entry name" value="Ribosomal_L6"/>
    <property type="match status" value="2"/>
</dbReference>
<dbReference type="PIRSF" id="PIRSF002162">
    <property type="entry name" value="Ribosomal_L6"/>
    <property type="match status" value="1"/>
</dbReference>
<dbReference type="PRINTS" id="PR00059">
    <property type="entry name" value="RIBOSOMALL6"/>
</dbReference>
<dbReference type="SUPFAM" id="SSF56053">
    <property type="entry name" value="Ribosomal protein L6"/>
    <property type="match status" value="2"/>
</dbReference>
<dbReference type="PROSITE" id="PS00525">
    <property type="entry name" value="RIBOSOMAL_L6_1"/>
    <property type="match status" value="1"/>
</dbReference>
<reference key="1">
    <citation type="journal article" date="2003" name="Lancet">
        <title>Sequencing and analysis of the genome of the Whipple's disease bacterium Tropheryma whipplei.</title>
        <authorList>
            <person name="Bentley S.D."/>
            <person name="Maiwald M."/>
            <person name="Murphy L.D."/>
            <person name="Pallen M.J."/>
            <person name="Yeats C.A."/>
            <person name="Dover L.G."/>
            <person name="Norbertczak H.T."/>
            <person name="Besra G.S."/>
            <person name="Quail M.A."/>
            <person name="Harris D.E."/>
            <person name="von Herbay A."/>
            <person name="Goble A."/>
            <person name="Rutter S."/>
            <person name="Squares R."/>
            <person name="Squares S."/>
            <person name="Barrell B.G."/>
            <person name="Parkhill J."/>
            <person name="Relman D.A."/>
        </authorList>
    </citation>
    <scope>NUCLEOTIDE SEQUENCE [LARGE SCALE GENOMIC DNA]</scope>
    <source>
        <strain>TW08/27</strain>
    </source>
</reference>
<sequence length="178" mass="18817">MSRVGKLPIEIPVGVEVCVNGRTVSITGPKGSLYLDIAEQIGVSVSDGKVLVSRSDDSRTARALHGLTRALIANNVHGVLHGYTKTLEIVGTGYRVSKKGENLELALGFSHPVFVDPVPGVSFGVEGNSKIIVSGIDKQAVGEAAASIRKLSKPEPYKGKGIRYSDEIVRRKVGKAGK</sequence>
<name>RL6_TROW8</name>
<protein>
    <recommendedName>
        <fullName evidence="1">Large ribosomal subunit protein uL6</fullName>
    </recommendedName>
    <alternativeName>
        <fullName evidence="2">50S ribosomal protein L6</fullName>
    </alternativeName>
</protein>
<comment type="function">
    <text evidence="1">This protein binds to the 23S rRNA, and is important in its secondary structure. It is located near the subunit interface in the base of the L7/L12 stalk, and near the tRNA binding site of the peptidyltransferase center.</text>
</comment>
<comment type="subunit">
    <text evidence="1">Part of the 50S ribosomal subunit.</text>
</comment>
<comment type="similarity">
    <text evidence="1">Belongs to the universal ribosomal protein uL6 family.</text>
</comment>
<comment type="sequence caution" evidence="2">
    <conflict type="erroneous initiation">
        <sequence resource="EMBL-CDS" id="CAD66898"/>
    </conflict>
</comment>
<keyword id="KW-0687">Ribonucleoprotein</keyword>
<keyword id="KW-0689">Ribosomal protein</keyword>
<keyword id="KW-0694">RNA-binding</keyword>
<keyword id="KW-0699">rRNA-binding</keyword>
<evidence type="ECO:0000255" key="1">
    <source>
        <dbReference type="HAMAP-Rule" id="MF_01365"/>
    </source>
</evidence>
<evidence type="ECO:0000305" key="2"/>